<feature type="chain" id="PRO_0000374154" description="tRNA-2-methylthio-N(6)-dimethylallyladenosine synthase">
    <location>
        <begin position="1"/>
        <end position="484"/>
    </location>
</feature>
<feature type="domain" description="MTTase N-terminal" evidence="1">
    <location>
        <begin position="29"/>
        <end position="149"/>
    </location>
</feature>
<feature type="domain" description="Radical SAM core" evidence="2">
    <location>
        <begin position="172"/>
        <end position="401"/>
    </location>
</feature>
<feature type="domain" description="TRAM" evidence="1">
    <location>
        <begin position="404"/>
        <end position="474"/>
    </location>
</feature>
<feature type="binding site" evidence="1">
    <location>
        <position position="38"/>
    </location>
    <ligand>
        <name>[4Fe-4S] cluster</name>
        <dbReference type="ChEBI" id="CHEBI:49883"/>
        <label>1</label>
    </ligand>
</feature>
<feature type="binding site" evidence="1">
    <location>
        <position position="78"/>
    </location>
    <ligand>
        <name>[4Fe-4S] cluster</name>
        <dbReference type="ChEBI" id="CHEBI:49883"/>
        <label>1</label>
    </ligand>
</feature>
<feature type="binding site" evidence="1">
    <location>
        <position position="112"/>
    </location>
    <ligand>
        <name>[4Fe-4S] cluster</name>
        <dbReference type="ChEBI" id="CHEBI:49883"/>
        <label>1</label>
    </ligand>
</feature>
<feature type="binding site" evidence="1">
    <location>
        <position position="186"/>
    </location>
    <ligand>
        <name>[4Fe-4S] cluster</name>
        <dbReference type="ChEBI" id="CHEBI:49883"/>
        <label>2</label>
        <note>4Fe-4S-S-AdoMet</note>
    </ligand>
</feature>
<feature type="binding site" evidence="1">
    <location>
        <position position="190"/>
    </location>
    <ligand>
        <name>[4Fe-4S] cluster</name>
        <dbReference type="ChEBI" id="CHEBI:49883"/>
        <label>2</label>
        <note>4Fe-4S-S-AdoMet</note>
    </ligand>
</feature>
<feature type="binding site" evidence="1">
    <location>
        <position position="193"/>
    </location>
    <ligand>
        <name>[4Fe-4S] cluster</name>
        <dbReference type="ChEBI" id="CHEBI:49883"/>
        <label>2</label>
        <note>4Fe-4S-S-AdoMet</note>
    </ligand>
</feature>
<name>MIAB_BIFLS</name>
<reference key="1">
    <citation type="journal article" date="2008" name="Proc. Natl. Acad. Sci. U.S.A.">
        <title>The genome sequence of Bifidobacterium longum subsp. infantis reveals adaptations for milk utilization within the infant microbiome.</title>
        <authorList>
            <person name="Sela D.A."/>
            <person name="Chapman J."/>
            <person name="Adeuya A."/>
            <person name="Kim J.H."/>
            <person name="Chen F."/>
            <person name="Whitehead T.R."/>
            <person name="Lapidus A."/>
            <person name="Rokhsar D.S."/>
            <person name="Lebrilla C.B."/>
            <person name="German J.B."/>
            <person name="Price N.P."/>
            <person name="Richardson P.M."/>
            <person name="Mills D.A."/>
        </authorList>
    </citation>
    <scope>NUCLEOTIDE SEQUENCE [LARGE SCALE GENOMIC DNA]</scope>
    <source>
        <strain>ATCC 15697 / DSM 20088 / JCM 1222 / NCTC 11817 / S12</strain>
    </source>
</reference>
<reference key="2">
    <citation type="journal article" date="2011" name="Nature">
        <title>Bifidobacteria can protect from enteropathogenic infection through production of acetate.</title>
        <authorList>
            <person name="Fukuda S."/>
            <person name="Toh H."/>
            <person name="Hase K."/>
            <person name="Oshima K."/>
            <person name="Nakanishi Y."/>
            <person name="Yoshimura K."/>
            <person name="Tobe T."/>
            <person name="Clarke J.M."/>
            <person name="Topping D.L."/>
            <person name="Suzuki T."/>
            <person name="Taylor T.D."/>
            <person name="Itoh K."/>
            <person name="Kikuchi J."/>
            <person name="Morita H."/>
            <person name="Hattori M."/>
            <person name="Ohno H."/>
        </authorList>
    </citation>
    <scope>NUCLEOTIDE SEQUENCE [LARGE SCALE GENOMIC DNA]</scope>
    <source>
        <strain>ATCC 15697 / DSM 20088 / JCM 1222 / NCTC 11817 / S12</strain>
    </source>
</reference>
<accession>B7GQG0</accession>
<accession>E8MRC3</accession>
<dbReference type="EC" id="2.8.4.3" evidence="1"/>
<dbReference type="EMBL" id="CP001095">
    <property type="protein sequence ID" value="ACJ52040.1"/>
    <property type="molecule type" value="Genomic_DNA"/>
</dbReference>
<dbReference type="EMBL" id="AP010889">
    <property type="protein sequence ID" value="BAJ68548.1"/>
    <property type="status" value="ALT_INIT"/>
    <property type="molecule type" value="Genomic_DNA"/>
</dbReference>
<dbReference type="RefSeq" id="WP_012577306.1">
    <property type="nucleotide sequence ID" value="NZ_JDTT01000006.1"/>
</dbReference>
<dbReference type="SMR" id="B7GQG0"/>
<dbReference type="KEGG" id="bln:Blon_0941"/>
<dbReference type="KEGG" id="blon:BLIJ_0958"/>
<dbReference type="PATRIC" id="fig|391904.8.peg.968"/>
<dbReference type="HOGENOM" id="CLU_018697_2_2_11"/>
<dbReference type="Proteomes" id="UP000001360">
    <property type="component" value="Chromosome"/>
</dbReference>
<dbReference type="GO" id="GO:0005829">
    <property type="term" value="C:cytosol"/>
    <property type="evidence" value="ECO:0007669"/>
    <property type="project" value="TreeGrafter"/>
</dbReference>
<dbReference type="GO" id="GO:0051539">
    <property type="term" value="F:4 iron, 4 sulfur cluster binding"/>
    <property type="evidence" value="ECO:0007669"/>
    <property type="project" value="UniProtKB-UniRule"/>
</dbReference>
<dbReference type="GO" id="GO:0046872">
    <property type="term" value="F:metal ion binding"/>
    <property type="evidence" value="ECO:0007669"/>
    <property type="project" value="UniProtKB-KW"/>
</dbReference>
<dbReference type="GO" id="GO:0035597">
    <property type="term" value="F:N6-isopentenyladenosine methylthiotransferase activity"/>
    <property type="evidence" value="ECO:0007669"/>
    <property type="project" value="TreeGrafter"/>
</dbReference>
<dbReference type="CDD" id="cd01335">
    <property type="entry name" value="Radical_SAM"/>
    <property type="match status" value="1"/>
</dbReference>
<dbReference type="FunFam" id="3.40.50.12160:FF:000003">
    <property type="entry name" value="CDK5 regulatory subunit-associated protein 1"/>
    <property type="match status" value="1"/>
</dbReference>
<dbReference type="FunFam" id="3.80.30.20:FF:000001">
    <property type="entry name" value="tRNA-2-methylthio-N(6)-dimethylallyladenosine synthase 2"/>
    <property type="match status" value="1"/>
</dbReference>
<dbReference type="Gene3D" id="3.40.50.12160">
    <property type="entry name" value="Methylthiotransferase, N-terminal domain"/>
    <property type="match status" value="1"/>
</dbReference>
<dbReference type="Gene3D" id="3.80.30.20">
    <property type="entry name" value="tm_1862 like domain"/>
    <property type="match status" value="1"/>
</dbReference>
<dbReference type="HAMAP" id="MF_01864">
    <property type="entry name" value="tRNA_metthiotr_MiaB"/>
    <property type="match status" value="1"/>
</dbReference>
<dbReference type="InterPro" id="IPR006638">
    <property type="entry name" value="Elp3/MiaA/NifB-like_rSAM"/>
</dbReference>
<dbReference type="InterPro" id="IPR005839">
    <property type="entry name" value="Methylthiotransferase"/>
</dbReference>
<dbReference type="InterPro" id="IPR020612">
    <property type="entry name" value="Methylthiotransferase_CS"/>
</dbReference>
<dbReference type="InterPro" id="IPR013848">
    <property type="entry name" value="Methylthiotransferase_N"/>
</dbReference>
<dbReference type="InterPro" id="IPR038135">
    <property type="entry name" value="Methylthiotransferase_N_sf"/>
</dbReference>
<dbReference type="InterPro" id="IPR006463">
    <property type="entry name" value="MiaB_methiolase"/>
</dbReference>
<dbReference type="InterPro" id="IPR007197">
    <property type="entry name" value="rSAM"/>
</dbReference>
<dbReference type="InterPro" id="IPR023404">
    <property type="entry name" value="rSAM_horseshoe"/>
</dbReference>
<dbReference type="NCBIfam" id="TIGR01574">
    <property type="entry name" value="miaB-methiolase"/>
    <property type="match status" value="1"/>
</dbReference>
<dbReference type="NCBIfam" id="TIGR00089">
    <property type="entry name" value="MiaB/RimO family radical SAM methylthiotransferase"/>
    <property type="match status" value="1"/>
</dbReference>
<dbReference type="PANTHER" id="PTHR43020">
    <property type="entry name" value="CDK5 REGULATORY SUBUNIT-ASSOCIATED PROTEIN 1"/>
    <property type="match status" value="1"/>
</dbReference>
<dbReference type="PANTHER" id="PTHR43020:SF2">
    <property type="entry name" value="MITOCHONDRIAL TRNA METHYLTHIOTRANSFERASE CDK5RAP1"/>
    <property type="match status" value="1"/>
</dbReference>
<dbReference type="Pfam" id="PF04055">
    <property type="entry name" value="Radical_SAM"/>
    <property type="match status" value="1"/>
</dbReference>
<dbReference type="Pfam" id="PF00919">
    <property type="entry name" value="UPF0004"/>
    <property type="match status" value="1"/>
</dbReference>
<dbReference type="SFLD" id="SFLDF00273">
    <property type="entry name" value="(dimethylallyl)adenosine_tRNA"/>
    <property type="match status" value="1"/>
</dbReference>
<dbReference type="SFLD" id="SFLDG01082">
    <property type="entry name" value="B12-binding_domain_containing"/>
    <property type="match status" value="1"/>
</dbReference>
<dbReference type="SFLD" id="SFLDG01061">
    <property type="entry name" value="methylthiotransferase"/>
    <property type="match status" value="1"/>
</dbReference>
<dbReference type="SMART" id="SM00729">
    <property type="entry name" value="Elp3"/>
    <property type="match status" value="1"/>
</dbReference>
<dbReference type="SUPFAM" id="SSF102114">
    <property type="entry name" value="Radical SAM enzymes"/>
    <property type="match status" value="1"/>
</dbReference>
<dbReference type="PROSITE" id="PS51449">
    <property type="entry name" value="MTTASE_N"/>
    <property type="match status" value="1"/>
</dbReference>
<dbReference type="PROSITE" id="PS01278">
    <property type="entry name" value="MTTASE_RADICAL"/>
    <property type="match status" value="1"/>
</dbReference>
<dbReference type="PROSITE" id="PS51918">
    <property type="entry name" value="RADICAL_SAM"/>
    <property type="match status" value="1"/>
</dbReference>
<proteinExistence type="inferred from homology"/>
<protein>
    <recommendedName>
        <fullName evidence="1">tRNA-2-methylthio-N(6)-dimethylallyladenosine synthase</fullName>
        <ecNumber evidence="1">2.8.4.3</ecNumber>
    </recommendedName>
    <alternativeName>
        <fullName evidence="1">(Dimethylallyl)adenosine tRNA methylthiotransferase MiaB</fullName>
    </alternativeName>
    <alternativeName>
        <fullName evidence="1">tRNA-i(6)A37 methylthiotransferase</fullName>
    </alternativeName>
</protein>
<sequence length="484" mass="53220">MNEDMMTEAERASIAADGTDSLLGERGKGVFHIHTLGCQMNVHDSERIAGVLEANGYVPATEDQINDNDLDLLVLNTCAVRENAAERMYGTIGRFNRVKLVRPNLQIAVGGCMAQLDRKKIADTAPWVSAVFGTKNIEDLPKLLDQNRATGKAQVQVTEQLRQFPSQLPAARASRISSWVAISVGCNNTCTFCIVPTTRGKEKDRRPGDILDEIRQCVAGGAKEVTLLGQNVNSFGYGIGDRYAFSKLLRACGTIDGLERVRFTSPHPAAFTDDVIAAMAETPNIMHQLHFPLQSGSDRILRAMRRSYRSAKFLDILGRIREAMPDAQISTDIIVGFPGETEEDFQQTMDVVRQARFSSAFTFIYSPRPGTPAAAMEQIPRDVVQDRFDRLVALQEQITEENLATFEGRDVEVMITGKLGKKDTDTHRVTGREKTGVLVHIGVPEGEPVPEIGDFVTVTVTHAGRHNLLADPDVAAGQTYSVRH</sequence>
<keyword id="KW-0004">4Fe-4S</keyword>
<keyword id="KW-0963">Cytoplasm</keyword>
<keyword id="KW-0408">Iron</keyword>
<keyword id="KW-0411">Iron-sulfur</keyword>
<keyword id="KW-0479">Metal-binding</keyword>
<keyword id="KW-0949">S-adenosyl-L-methionine</keyword>
<keyword id="KW-0808">Transferase</keyword>
<keyword id="KW-0819">tRNA processing</keyword>
<gene>
    <name evidence="1" type="primary">miaB</name>
    <name type="ordered locus">Blon_0941</name>
    <name type="ordered locus">BLIJ_0958</name>
</gene>
<organism>
    <name type="scientific">Bifidobacterium longum subsp. infantis (strain ATCC 15697 / DSM 20088 / JCM 1222 / NCTC 11817 / S12)</name>
    <dbReference type="NCBI Taxonomy" id="391904"/>
    <lineage>
        <taxon>Bacteria</taxon>
        <taxon>Bacillati</taxon>
        <taxon>Actinomycetota</taxon>
        <taxon>Actinomycetes</taxon>
        <taxon>Bifidobacteriales</taxon>
        <taxon>Bifidobacteriaceae</taxon>
        <taxon>Bifidobacterium</taxon>
    </lineage>
</organism>
<evidence type="ECO:0000255" key="1">
    <source>
        <dbReference type="HAMAP-Rule" id="MF_01864"/>
    </source>
</evidence>
<evidence type="ECO:0000255" key="2">
    <source>
        <dbReference type="PROSITE-ProRule" id="PRU01266"/>
    </source>
</evidence>
<evidence type="ECO:0000305" key="3"/>
<comment type="function">
    <text evidence="1">Catalyzes the methylthiolation of N6-(dimethylallyl)adenosine (i(6)A), leading to the formation of 2-methylthio-N6-(dimethylallyl)adenosine (ms(2)i(6)A) at position 37 in tRNAs that read codons beginning with uridine.</text>
</comment>
<comment type="catalytic activity">
    <reaction evidence="1">
        <text>N(6)-dimethylallyladenosine(37) in tRNA + (sulfur carrier)-SH + AH2 + 2 S-adenosyl-L-methionine = 2-methylsulfanyl-N(6)-dimethylallyladenosine(37) in tRNA + (sulfur carrier)-H + 5'-deoxyadenosine + L-methionine + A + S-adenosyl-L-homocysteine + 2 H(+)</text>
        <dbReference type="Rhea" id="RHEA:37067"/>
        <dbReference type="Rhea" id="RHEA-COMP:10375"/>
        <dbReference type="Rhea" id="RHEA-COMP:10376"/>
        <dbReference type="Rhea" id="RHEA-COMP:14737"/>
        <dbReference type="Rhea" id="RHEA-COMP:14739"/>
        <dbReference type="ChEBI" id="CHEBI:13193"/>
        <dbReference type="ChEBI" id="CHEBI:15378"/>
        <dbReference type="ChEBI" id="CHEBI:17319"/>
        <dbReference type="ChEBI" id="CHEBI:17499"/>
        <dbReference type="ChEBI" id="CHEBI:29917"/>
        <dbReference type="ChEBI" id="CHEBI:57844"/>
        <dbReference type="ChEBI" id="CHEBI:57856"/>
        <dbReference type="ChEBI" id="CHEBI:59789"/>
        <dbReference type="ChEBI" id="CHEBI:64428"/>
        <dbReference type="ChEBI" id="CHEBI:74415"/>
        <dbReference type="ChEBI" id="CHEBI:74417"/>
        <dbReference type="EC" id="2.8.4.3"/>
    </reaction>
</comment>
<comment type="cofactor">
    <cofactor evidence="1">
        <name>[4Fe-4S] cluster</name>
        <dbReference type="ChEBI" id="CHEBI:49883"/>
    </cofactor>
    <text evidence="1">Binds 2 [4Fe-4S] clusters. One cluster is coordinated with 3 cysteines and an exchangeable S-adenosyl-L-methionine.</text>
</comment>
<comment type="subunit">
    <text evidence="1">Monomer.</text>
</comment>
<comment type="subcellular location">
    <subcellularLocation>
        <location evidence="1">Cytoplasm</location>
    </subcellularLocation>
</comment>
<comment type="similarity">
    <text evidence="1">Belongs to the methylthiotransferase family. MiaB subfamily.</text>
</comment>
<comment type="sequence caution" evidence="3">
    <conflict type="erroneous initiation">
        <sequence resource="EMBL-CDS" id="BAJ68548"/>
    </conflict>
    <text>Truncated N-terminus.</text>
</comment>